<comment type="function">
    <text evidence="1">DEAD-box RNA helicase-like protein required for pre-18S rRNA processing, specifically at sites A0, A1, and A2.</text>
</comment>
<comment type="subunit">
    <text evidence="1">Component of the ribosomal small subunit (SSU) processome composed of at least 40 protein subunits and snoRNA U3.</text>
</comment>
<comment type="subcellular location">
    <subcellularLocation>
        <location evidence="1">Nucleus</location>
        <location evidence="1">Nucleolus</location>
    </subcellularLocation>
</comment>
<comment type="similarity">
    <text evidence="3">Belongs to the UTP25 family.</text>
</comment>
<gene>
    <name type="primary">utp25</name>
    <name type="ORF">ATEG_08558</name>
</gene>
<protein>
    <recommendedName>
        <fullName>U3 small nucleolar RNA-associated protein 25</fullName>
        <shortName>U3 snoRNA-associated protein 25</shortName>
    </recommendedName>
    <alternativeName>
        <fullName>U three protein 25</fullName>
    </alternativeName>
</protein>
<name>UTP25_ASPTN</name>
<organism>
    <name type="scientific">Aspergillus terreus (strain NIH 2624 / FGSC A1156)</name>
    <dbReference type="NCBI Taxonomy" id="341663"/>
    <lineage>
        <taxon>Eukaryota</taxon>
        <taxon>Fungi</taxon>
        <taxon>Dikarya</taxon>
        <taxon>Ascomycota</taxon>
        <taxon>Pezizomycotina</taxon>
        <taxon>Eurotiomycetes</taxon>
        <taxon>Eurotiomycetidae</taxon>
        <taxon>Eurotiales</taxon>
        <taxon>Aspergillaceae</taxon>
        <taxon>Aspergillus</taxon>
        <taxon>Aspergillus subgen. Circumdati</taxon>
    </lineage>
</organism>
<sequence length="723" mass="81404">MAPPRGKGPKRHAKGSRAPVKRKNGFATSRLDEVDSDASSAADEFPTGDLSENEMDHEEAGDDASDSEEEDLNAGQSYNELLQLLQATDSKGPARKKRKVEHKEEKVKKLKTDAVVEGAEEEEKEEEEEAVANDLEQQEPSDEEDANLDEANADEQDSDTEDGTDPFESHFANPKEADLTKKIQAVEAKKWTTAKKETEGLRLVRSVPEGAEASFLPTMKSLANVKLKRKLQTTAKDAIPSISGHAQHLAPYVFDYQDVLYGARTTSNAVPMRDILAAHATNHVLKTRDRVLKNNLRAAKEQDADLDLRDQGFTRPKVLYLLPSKQACVRVVESITRLFQPEQQENKKRFLDTFSAEDDVSWDNKPDDFRELFAGNNDDMFRLGLKFTRKTIKFFAQFYTSDMILASPLGLRTIMDQADAKKRDHDFLSSIEVVIVDHADALQMQNWDHVDYILKHLNLQPKEAHGCDFSRVRPWYLDNQARHVRQLIMLAGFITPEINSVYSAQMQNVAGKVKATPVYEGAISELPLPVSVKQTFSRFDSLSPAKDPDARFKHFTTTVLSTLVRQITAGRGKHRGGVLIVIPSYLDFVRVRNHFATSAQTANLSFGAISEYTEPREVARARSHFMNGRHSVLLYSERFHHFRRYQIRGVRQVVMYGVPENPRFYGEMVGFLGLDAAAVVEAAEGGVRALFSKWDALKLERVVGTKRLGNMMRERGGDTFTFV</sequence>
<accession>Q0CCM6</accession>
<evidence type="ECO:0000250" key="1"/>
<evidence type="ECO:0000256" key="2">
    <source>
        <dbReference type="SAM" id="MobiDB-lite"/>
    </source>
</evidence>
<evidence type="ECO:0000305" key="3"/>
<proteinExistence type="inferred from homology"/>
<reference key="1">
    <citation type="submission" date="2005-09" db="EMBL/GenBank/DDBJ databases">
        <title>Annotation of the Aspergillus terreus NIH2624 genome.</title>
        <authorList>
            <person name="Birren B.W."/>
            <person name="Lander E.S."/>
            <person name="Galagan J.E."/>
            <person name="Nusbaum C."/>
            <person name="Devon K."/>
            <person name="Henn M."/>
            <person name="Ma L.-J."/>
            <person name="Jaffe D.B."/>
            <person name="Butler J."/>
            <person name="Alvarez P."/>
            <person name="Gnerre S."/>
            <person name="Grabherr M."/>
            <person name="Kleber M."/>
            <person name="Mauceli E.W."/>
            <person name="Brockman W."/>
            <person name="Rounsley S."/>
            <person name="Young S.K."/>
            <person name="LaButti K."/>
            <person name="Pushparaj V."/>
            <person name="DeCaprio D."/>
            <person name="Crawford M."/>
            <person name="Koehrsen M."/>
            <person name="Engels R."/>
            <person name="Montgomery P."/>
            <person name="Pearson M."/>
            <person name="Howarth C."/>
            <person name="Larson L."/>
            <person name="Luoma S."/>
            <person name="White J."/>
            <person name="Alvarado L."/>
            <person name="Kodira C.D."/>
            <person name="Zeng Q."/>
            <person name="Oleary S."/>
            <person name="Yandava C."/>
            <person name="Denning D.W."/>
            <person name="Nierman W.C."/>
            <person name="Milne T."/>
            <person name="Madden K."/>
        </authorList>
    </citation>
    <scope>NUCLEOTIDE SEQUENCE [LARGE SCALE GENOMIC DNA]</scope>
    <source>
        <strain>NIH 2624 / FGSC A1156</strain>
    </source>
</reference>
<keyword id="KW-0539">Nucleus</keyword>
<keyword id="KW-1185">Reference proteome</keyword>
<keyword id="KW-0687">Ribonucleoprotein</keyword>
<keyword id="KW-0690">Ribosome biogenesis</keyword>
<keyword id="KW-0698">rRNA processing</keyword>
<dbReference type="EMBL" id="CH476606">
    <property type="protein sequence ID" value="EAU30690.1"/>
    <property type="molecule type" value="Genomic_DNA"/>
</dbReference>
<dbReference type="RefSeq" id="XP_001217144.1">
    <property type="nucleotide sequence ID" value="XM_001217143.1"/>
</dbReference>
<dbReference type="STRING" id="341663.Q0CCM6"/>
<dbReference type="EnsemblFungi" id="EAU30690">
    <property type="protein sequence ID" value="EAU30690"/>
    <property type="gene ID" value="ATEG_08558"/>
</dbReference>
<dbReference type="GeneID" id="4323277"/>
<dbReference type="VEuPathDB" id="FungiDB:ATEG_08558"/>
<dbReference type="eggNOG" id="KOG2340">
    <property type="taxonomic scope" value="Eukaryota"/>
</dbReference>
<dbReference type="HOGENOM" id="CLU_018705_0_1_1"/>
<dbReference type="OMA" id="QDRGDTF"/>
<dbReference type="OrthoDB" id="10264378at2759"/>
<dbReference type="Proteomes" id="UP000007963">
    <property type="component" value="Unassembled WGS sequence"/>
</dbReference>
<dbReference type="GO" id="GO:0005730">
    <property type="term" value="C:nucleolus"/>
    <property type="evidence" value="ECO:0007669"/>
    <property type="project" value="UniProtKB-SubCell"/>
</dbReference>
<dbReference type="GO" id="GO:0032040">
    <property type="term" value="C:small-subunit processome"/>
    <property type="evidence" value="ECO:0007669"/>
    <property type="project" value="EnsemblFungi"/>
</dbReference>
<dbReference type="GO" id="GO:0019843">
    <property type="term" value="F:rRNA binding"/>
    <property type="evidence" value="ECO:0007669"/>
    <property type="project" value="EnsemblFungi"/>
</dbReference>
<dbReference type="GO" id="GO:0034511">
    <property type="term" value="F:U3 snoRNA binding"/>
    <property type="evidence" value="ECO:0007669"/>
    <property type="project" value="EnsemblFungi"/>
</dbReference>
<dbReference type="GO" id="GO:0000462">
    <property type="term" value="P:maturation of SSU-rRNA from tricistronic rRNA transcript (SSU-rRNA, 5.8S rRNA, LSU-rRNA)"/>
    <property type="evidence" value="ECO:0007669"/>
    <property type="project" value="EnsemblFungi"/>
</dbReference>
<dbReference type="FunFam" id="3.40.50.300:FF:002356">
    <property type="entry name" value="U3 small nucleolar RNA-associated protein 25"/>
    <property type="match status" value="1"/>
</dbReference>
<dbReference type="Gene3D" id="3.40.50.300">
    <property type="entry name" value="P-loop containing nucleotide triphosphate hydrolases"/>
    <property type="match status" value="1"/>
</dbReference>
<dbReference type="InterPro" id="IPR027417">
    <property type="entry name" value="P-loop_NTPase"/>
</dbReference>
<dbReference type="InterPro" id="IPR010678">
    <property type="entry name" value="UTP25"/>
</dbReference>
<dbReference type="InterPro" id="IPR053939">
    <property type="entry name" value="UTP25_C"/>
</dbReference>
<dbReference type="InterPro" id="IPR053940">
    <property type="entry name" value="UTP25_NTPase-like"/>
</dbReference>
<dbReference type="PANTHER" id="PTHR12933">
    <property type="entry name" value="ORF PROTEIN-RELATED"/>
    <property type="match status" value="1"/>
</dbReference>
<dbReference type="PANTHER" id="PTHR12933:SF0">
    <property type="entry name" value="U3 SMALL NUCLEOLAR RNA-ASSOCIATED PROTEIN 25 HOMOLOG"/>
    <property type="match status" value="1"/>
</dbReference>
<dbReference type="Pfam" id="PF06862">
    <property type="entry name" value="Utp25_C"/>
    <property type="match status" value="1"/>
</dbReference>
<dbReference type="Pfam" id="PF22916">
    <property type="entry name" value="UTP25_NTPase-like"/>
    <property type="match status" value="1"/>
</dbReference>
<feature type="chain" id="PRO_0000408105" description="U3 small nucleolar RNA-associated protein 25">
    <location>
        <begin position="1"/>
        <end position="723"/>
    </location>
</feature>
<feature type="region of interest" description="Disordered" evidence="2">
    <location>
        <begin position="1"/>
        <end position="179"/>
    </location>
</feature>
<feature type="compositionally biased region" description="Basic residues" evidence="2">
    <location>
        <begin position="7"/>
        <end position="24"/>
    </location>
</feature>
<feature type="compositionally biased region" description="Acidic residues" evidence="2">
    <location>
        <begin position="51"/>
        <end position="72"/>
    </location>
</feature>
<feature type="compositionally biased region" description="Polar residues" evidence="2">
    <location>
        <begin position="74"/>
        <end position="89"/>
    </location>
</feature>
<feature type="compositionally biased region" description="Basic and acidic residues" evidence="2">
    <location>
        <begin position="101"/>
        <end position="114"/>
    </location>
</feature>
<feature type="compositionally biased region" description="Acidic residues" evidence="2">
    <location>
        <begin position="118"/>
        <end position="165"/>
    </location>
</feature>